<organism>
    <name type="scientific">Mycobacterium bovis (strain ATCC BAA-935 / AF2122/97)</name>
    <dbReference type="NCBI Taxonomy" id="233413"/>
    <lineage>
        <taxon>Bacteria</taxon>
        <taxon>Bacillati</taxon>
        <taxon>Actinomycetota</taxon>
        <taxon>Actinomycetes</taxon>
        <taxon>Mycobacteriales</taxon>
        <taxon>Mycobacteriaceae</taxon>
        <taxon>Mycobacterium</taxon>
        <taxon>Mycobacterium tuberculosis complex</taxon>
    </lineage>
</organism>
<feature type="chain" id="PRO_0000179591" description="ATP-dependent Clp protease proteolytic subunit 2">
    <location>
        <begin position="1"/>
        <end position="214"/>
    </location>
</feature>
<feature type="active site" description="Nucleophile" evidence="1">
    <location>
        <position position="110"/>
    </location>
</feature>
<feature type="active site" evidence="1">
    <location>
        <position position="135"/>
    </location>
</feature>
<keyword id="KW-0963">Cytoplasm</keyword>
<keyword id="KW-0378">Hydrolase</keyword>
<keyword id="KW-0645">Protease</keyword>
<keyword id="KW-1185">Reference proteome</keyword>
<keyword id="KW-0720">Serine protease</keyword>
<protein>
    <recommendedName>
        <fullName evidence="1">ATP-dependent Clp protease proteolytic subunit 2</fullName>
        <ecNumber evidence="1">3.4.21.92</ecNumber>
    </recommendedName>
    <alternativeName>
        <fullName evidence="1">Endopeptidase Clp 2</fullName>
    </alternativeName>
</protein>
<comment type="function">
    <text evidence="1">Cleaves peptides in various proteins in a process that requires ATP hydrolysis. Has a chymotrypsin-like activity. Plays a major role in the degradation of misfolded proteins.</text>
</comment>
<comment type="catalytic activity">
    <reaction evidence="1">
        <text>Hydrolysis of proteins to small peptides in the presence of ATP and magnesium. alpha-casein is the usual test substrate. In the absence of ATP, only oligopeptides shorter than five residues are hydrolyzed (such as succinyl-Leu-Tyr-|-NHMec, and Leu-Tyr-Leu-|-Tyr-Trp, in which cleavage of the -Tyr-|-Leu- and -Tyr-|-Trp bonds also occurs).</text>
        <dbReference type="EC" id="3.4.21.92"/>
    </reaction>
</comment>
<comment type="subunit">
    <text evidence="1">Fourteen ClpP subunits assemble into 2 heptameric rings which stack back to back to give a disk-like structure with a central cavity, resembling the structure of eukaryotic proteasomes.</text>
</comment>
<comment type="subcellular location">
    <subcellularLocation>
        <location evidence="1">Cytoplasm</location>
    </subcellularLocation>
</comment>
<comment type="similarity">
    <text evidence="1">Belongs to the peptidase S14 family.</text>
</comment>
<dbReference type="EC" id="3.4.21.92" evidence="1"/>
<dbReference type="EMBL" id="LT708304">
    <property type="protein sequence ID" value="SIU01102.1"/>
    <property type="molecule type" value="Genomic_DNA"/>
</dbReference>
<dbReference type="RefSeq" id="NP_856134.1">
    <property type="nucleotide sequence ID" value="NC_002945.3"/>
</dbReference>
<dbReference type="RefSeq" id="WP_003412648.1">
    <property type="nucleotide sequence ID" value="NC_002945.4"/>
</dbReference>
<dbReference type="SMR" id="P63784"/>
<dbReference type="MEROPS" id="S14.009"/>
<dbReference type="KEGG" id="mbo:BQ2027_MB2487C"/>
<dbReference type="PATRIC" id="fig|233413.5.peg.2738"/>
<dbReference type="Proteomes" id="UP000001419">
    <property type="component" value="Chromosome"/>
</dbReference>
<dbReference type="GO" id="GO:0005737">
    <property type="term" value="C:cytoplasm"/>
    <property type="evidence" value="ECO:0007669"/>
    <property type="project" value="UniProtKB-SubCell"/>
</dbReference>
<dbReference type="GO" id="GO:0009368">
    <property type="term" value="C:endopeptidase Clp complex"/>
    <property type="evidence" value="ECO:0007669"/>
    <property type="project" value="TreeGrafter"/>
</dbReference>
<dbReference type="GO" id="GO:0004176">
    <property type="term" value="F:ATP-dependent peptidase activity"/>
    <property type="evidence" value="ECO:0007669"/>
    <property type="project" value="InterPro"/>
</dbReference>
<dbReference type="GO" id="GO:0051117">
    <property type="term" value="F:ATPase binding"/>
    <property type="evidence" value="ECO:0007669"/>
    <property type="project" value="TreeGrafter"/>
</dbReference>
<dbReference type="GO" id="GO:0004252">
    <property type="term" value="F:serine-type endopeptidase activity"/>
    <property type="evidence" value="ECO:0007669"/>
    <property type="project" value="UniProtKB-UniRule"/>
</dbReference>
<dbReference type="GO" id="GO:0006515">
    <property type="term" value="P:protein quality control for misfolded or incompletely synthesized proteins"/>
    <property type="evidence" value="ECO:0007669"/>
    <property type="project" value="TreeGrafter"/>
</dbReference>
<dbReference type="CDD" id="cd07017">
    <property type="entry name" value="S14_ClpP_2"/>
    <property type="match status" value="1"/>
</dbReference>
<dbReference type="FunFam" id="3.90.226.10:FF:000002">
    <property type="entry name" value="ATP-dependent Clp protease proteolytic subunit"/>
    <property type="match status" value="1"/>
</dbReference>
<dbReference type="Gene3D" id="3.90.226.10">
    <property type="entry name" value="2-enoyl-CoA Hydratase, Chain A, domain 1"/>
    <property type="match status" value="1"/>
</dbReference>
<dbReference type="HAMAP" id="MF_00444">
    <property type="entry name" value="ClpP"/>
    <property type="match status" value="1"/>
</dbReference>
<dbReference type="InterPro" id="IPR001907">
    <property type="entry name" value="ClpP"/>
</dbReference>
<dbReference type="InterPro" id="IPR029045">
    <property type="entry name" value="ClpP/crotonase-like_dom_sf"/>
</dbReference>
<dbReference type="InterPro" id="IPR023562">
    <property type="entry name" value="ClpP/TepA"/>
</dbReference>
<dbReference type="InterPro" id="IPR033135">
    <property type="entry name" value="ClpP_His_AS"/>
</dbReference>
<dbReference type="InterPro" id="IPR018215">
    <property type="entry name" value="ClpP_Ser_AS"/>
</dbReference>
<dbReference type="NCBIfam" id="NF001368">
    <property type="entry name" value="PRK00277.1"/>
    <property type="match status" value="1"/>
</dbReference>
<dbReference type="NCBIfam" id="NF009205">
    <property type="entry name" value="PRK12553.1"/>
    <property type="match status" value="1"/>
</dbReference>
<dbReference type="PANTHER" id="PTHR10381">
    <property type="entry name" value="ATP-DEPENDENT CLP PROTEASE PROTEOLYTIC SUBUNIT"/>
    <property type="match status" value="1"/>
</dbReference>
<dbReference type="PANTHER" id="PTHR10381:SF26">
    <property type="entry name" value="ATP-DEPENDENT CLP PROTEASE PROTEOLYTIC SUBUNIT-LIKE-RELATED"/>
    <property type="match status" value="1"/>
</dbReference>
<dbReference type="Pfam" id="PF00574">
    <property type="entry name" value="CLP_protease"/>
    <property type="match status" value="1"/>
</dbReference>
<dbReference type="PRINTS" id="PR00127">
    <property type="entry name" value="CLPPROTEASEP"/>
</dbReference>
<dbReference type="SUPFAM" id="SSF52096">
    <property type="entry name" value="ClpP/crotonase"/>
    <property type="match status" value="1"/>
</dbReference>
<dbReference type="PROSITE" id="PS00382">
    <property type="entry name" value="CLP_PROTEASE_HIS"/>
    <property type="match status" value="1"/>
</dbReference>
<dbReference type="PROSITE" id="PS00381">
    <property type="entry name" value="CLP_PROTEASE_SER"/>
    <property type="match status" value="1"/>
</dbReference>
<evidence type="ECO:0000255" key="1">
    <source>
        <dbReference type="HAMAP-Rule" id="MF_00444"/>
    </source>
</evidence>
<accession>P63784</accession>
<accession>A0A1R3Y1A7</accession>
<accession>O53187</accession>
<accession>X2BL63</accession>
<gene>
    <name evidence="1" type="primary">clpP2</name>
    <name type="ordered locus">BQ2027_MB2487C</name>
</gene>
<reference key="1">
    <citation type="journal article" date="2003" name="Proc. Natl. Acad. Sci. U.S.A.">
        <title>The complete genome sequence of Mycobacterium bovis.</title>
        <authorList>
            <person name="Garnier T."/>
            <person name="Eiglmeier K."/>
            <person name="Camus J.-C."/>
            <person name="Medina N."/>
            <person name="Mansoor H."/>
            <person name="Pryor M."/>
            <person name="Duthoy S."/>
            <person name="Grondin S."/>
            <person name="Lacroix C."/>
            <person name="Monsempe C."/>
            <person name="Simon S."/>
            <person name="Harris B."/>
            <person name="Atkin R."/>
            <person name="Doggett J."/>
            <person name="Mayes R."/>
            <person name="Keating L."/>
            <person name="Wheeler P.R."/>
            <person name="Parkhill J."/>
            <person name="Barrell B.G."/>
            <person name="Cole S.T."/>
            <person name="Gordon S.V."/>
            <person name="Hewinson R.G."/>
        </authorList>
    </citation>
    <scope>NUCLEOTIDE SEQUENCE [LARGE SCALE GENOMIC DNA]</scope>
    <source>
        <strain>ATCC BAA-935 / AF2122/97</strain>
    </source>
</reference>
<reference key="2">
    <citation type="journal article" date="2017" name="Genome Announc.">
        <title>Updated reference genome sequence and annotation of Mycobacterium bovis AF2122/97.</title>
        <authorList>
            <person name="Malone K.M."/>
            <person name="Farrell D."/>
            <person name="Stuber T.P."/>
            <person name="Schubert O.T."/>
            <person name="Aebersold R."/>
            <person name="Robbe-Austerman S."/>
            <person name="Gordon S.V."/>
        </authorList>
    </citation>
    <scope>NUCLEOTIDE SEQUENCE [LARGE SCALE GENOMIC DNA]</scope>
    <scope>GENOME REANNOTATION</scope>
    <source>
        <strain>ATCC BAA-935 / AF2122/97</strain>
    </source>
</reference>
<sequence>MNSQNSQIQPQARYILPSFIEHSSFGVKESNPYNKLFEERIIFLGVQVDDASANDIMAQLLVLESLDPDRDITMYINSPGGGFTSLMAIYDTMQYVRADIQTVCLGQAASAAAVLLAAGTPGKRMALPNARVLIHQPSLSGVIQGQFSDLEIQAAEIERMRTLMETTLARHTGKDAGVIRKDTDRDKILTAEEAKDYGIIDTVLEYRKLSAQTA</sequence>
<name>CLPP2_MYCBO</name>
<proteinExistence type="inferred from homology"/>